<evidence type="ECO:0000255" key="1">
    <source>
        <dbReference type="PROSITE-ProRule" id="PRU00541"/>
    </source>
</evidence>
<evidence type="ECO:0000255" key="2">
    <source>
        <dbReference type="PROSITE-ProRule" id="PRU00542"/>
    </source>
</evidence>
<evidence type="ECO:0000256" key="3">
    <source>
        <dbReference type="SAM" id="MobiDB-lite"/>
    </source>
</evidence>
<evidence type="ECO:0000269" key="4">
    <source>
    </source>
</evidence>
<evidence type="ECO:0000269" key="5">
    <source>
    </source>
</evidence>
<evidence type="ECO:0000269" key="6">
    <source>
    </source>
</evidence>
<evidence type="ECO:0000269" key="7">
    <source>
    </source>
</evidence>
<evidence type="ECO:0000269" key="8">
    <source>
    </source>
</evidence>
<evidence type="ECO:0000269" key="9">
    <source>
    </source>
</evidence>
<evidence type="ECO:0000269" key="10">
    <source ref="8"/>
</evidence>
<evidence type="ECO:0000303" key="11">
    <source>
    </source>
</evidence>
<evidence type="ECO:0000305" key="12"/>
<evidence type="ECO:0007744" key="13">
    <source>
        <dbReference type="PDB" id="5YZG"/>
    </source>
</evidence>
<evidence type="ECO:0007744" key="14">
    <source>
    </source>
</evidence>
<evidence type="ECO:0007744" key="15">
    <source>
    </source>
</evidence>
<evidence type="ECO:0007744" key="16">
    <source>
    </source>
</evidence>
<evidence type="ECO:0007744" key="17">
    <source>
    </source>
</evidence>
<evidence type="ECO:0007744" key="18">
    <source>
    </source>
</evidence>
<evidence type="ECO:0007744" key="19">
    <source>
    </source>
</evidence>
<evidence type="ECO:0007744" key="20">
    <source>
    </source>
</evidence>
<evidence type="ECO:0007829" key="21">
    <source>
        <dbReference type="PDB" id="6ZYM"/>
    </source>
</evidence>
<comment type="function">
    <text evidence="6 9 12">Probable ATP-binding RNA helicase (Probable). Involved in pre-mRNA splicing as component of the spliceosome (PubMed:29301961, PubMed:9524131).</text>
</comment>
<comment type="catalytic activity">
    <reaction>
        <text>ATP + H2O = ADP + phosphate + H(+)</text>
        <dbReference type="Rhea" id="RHEA:13065"/>
        <dbReference type="ChEBI" id="CHEBI:15377"/>
        <dbReference type="ChEBI" id="CHEBI:15378"/>
        <dbReference type="ChEBI" id="CHEBI:30616"/>
        <dbReference type="ChEBI" id="CHEBI:43474"/>
        <dbReference type="ChEBI" id="CHEBI:456216"/>
        <dbReference type="EC" id="3.6.4.13"/>
    </reaction>
</comment>
<comment type="subunit">
    <text evidence="4 6">Identified in the spliceosome C complex.</text>
</comment>
<comment type="interaction">
    <interactant intactId="EBI-1043041">
        <id>Q92620</id>
    </interactant>
    <interactant intactId="EBI-311446">
        <id>O60231</id>
        <label>DHX16</label>
    </interactant>
    <organismsDiffer>false</organismsDiffer>
    <experiments>2</experiments>
</comment>
<comment type="interaction">
    <interactant intactId="EBI-1043041">
        <id>Q92620</id>
    </interactant>
    <interactant intactId="EBI-746309">
        <id>Q92917</id>
        <label>GPKOW</label>
    </interactant>
    <organismsDiffer>false</organismsDiffer>
    <experiments>2</experiments>
</comment>
<comment type="interaction">
    <interactant intactId="EBI-1043041">
        <id>Q92620</id>
    </interactant>
    <interactant intactId="EBI-2512429">
        <id>Q96RS6</id>
        <label>NUDCD1</label>
    </interactant>
    <organismsDiffer>false</organismsDiffer>
    <experiments>4</experiments>
</comment>
<comment type="interaction">
    <interactant intactId="EBI-1043041">
        <id>Q92620</id>
    </interactant>
    <interactant intactId="EBI-721525">
        <id>P98175</id>
        <label>RBM10</label>
    </interactant>
    <organismsDiffer>false</organismsDiffer>
    <experiments>2</experiments>
</comment>
<comment type="interaction">
    <interactant intactId="EBI-1043041">
        <id>Q92620</id>
    </interactant>
    <interactant intactId="EBI-750109">
        <id>Q9NYB0</id>
        <label>TERF2IP</label>
    </interactant>
    <organismsDiffer>false</organismsDiffer>
    <experiments>2</experiments>
</comment>
<comment type="subcellular location">
    <subcellularLocation>
        <location evidence="6">Nucleus</location>
    </subcellularLocation>
</comment>
<comment type="alternative products">
    <event type="alternative splicing"/>
    <isoform>
        <id>Q92620-1</id>
        <name>1</name>
        <sequence type="displayed"/>
    </isoform>
    <isoform>
        <id>Q92620-2</id>
        <name>2</name>
        <sequence type="described" ref="VSP_056045"/>
    </isoform>
</comment>
<comment type="disease" evidence="5 7">
    <disease id="DI-05397">
        <name>Retinitis pigmentosa 84</name>
        <acronym>RP84</acronym>
        <description>A form of retinitis pigmentosa, a retinal dystrophy belonging to the group of pigmentary retinopathies. Retinitis pigmentosa is characterized by retinal pigment deposits visible on fundus examination and primary loss of rod photoreceptor cells followed by secondary loss of cone photoreceptors. Patients typically have night vision blindness and loss of midperipheral visual field. As their condition progresses, they lose their far peripheral visual field and eventually central vision as well. RP84 is an autosomal recessive, early onset form characterized by night blindness by age 4 and complete blindness by age 8. Funduscopy shows severely attenuated retinal vessels, severe macular atrophy, and prominent and deep macular colobomas lacking neuroretinal tissue.</description>
        <dbReference type="MIM" id="618220"/>
    </disease>
    <text>The disease is caused by variants affecting the gene represented in this entry.</text>
</comment>
<comment type="similarity">
    <text evidence="12">Belongs to the DEAD box helicase family. DEAH subfamily. PRP16 sub-subfamily.</text>
</comment>
<comment type="sequence caution" evidence="12">
    <conflict type="erroneous initiation">
        <sequence resource="EMBL-CDS" id="BAA13213"/>
    </conflict>
    <text>Extended N-terminus.</text>
</comment>
<feature type="initiator methionine" description="Removed" evidence="10 15">
    <location>
        <position position="1"/>
    </location>
</feature>
<feature type="chain" id="PRO_0000055147" description="Pre-mRNA-splicing factor ATP-dependent RNA helicase PRP16">
    <location>
        <begin position="2"/>
        <end position="1227"/>
    </location>
</feature>
<feature type="domain" description="Helicase ATP-binding" evidence="1">
    <location>
        <begin position="542"/>
        <end position="705"/>
    </location>
</feature>
<feature type="domain" description="Helicase C-terminal" evidence="2">
    <location>
        <begin position="727"/>
        <end position="902"/>
    </location>
</feature>
<feature type="region of interest" description="Disordered" evidence="3">
    <location>
        <begin position="60"/>
        <end position="320"/>
    </location>
</feature>
<feature type="region of interest" description="Disordered" evidence="3">
    <location>
        <begin position="1155"/>
        <end position="1227"/>
    </location>
</feature>
<feature type="short sequence motif" description="DEAH box">
    <location>
        <begin position="652"/>
        <end position="655"/>
    </location>
</feature>
<feature type="compositionally biased region" description="Basic and acidic residues" evidence="3">
    <location>
        <begin position="60"/>
        <end position="89"/>
    </location>
</feature>
<feature type="compositionally biased region" description="Basic and acidic residues" evidence="3">
    <location>
        <begin position="128"/>
        <end position="201"/>
    </location>
</feature>
<feature type="compositionally biased region" description="Polar residues" evidence="3">
    <location>
        <begin position="222"/>
        <end position="239"/>
    </location>
</feature>
<feature type="compositionally biased region" description="Basic and acidic residues" evidence="3">
    <location>
        <begin position="240"/>
        <end position="263"/>
    </location>
</feature>
<feature type="compositionally biased region" description="Acidic residues" evidence="3">
    <location>
        <begin position="300"/>
        <end position="310"/>
    </location>
</feature>
<feature type="compositionally biased region" description="Basic and acidic residues" evidence="3">
    <location>
        <begin position="311"/>
        <end position="320"/>
    </location>
</feature>
<feature type="compositionally biased region" description="Basic and acidic residues" evidence="3">
    <location>
        <begin position="1157"/>
        <end position="1169"/>
    </location>
</feature>
<feature type="compositionally biased region" description="Basic and acidic residues" evidence="3">
    <location>
        <begin position="1181"/>
        <end position="1194"/>
    </location>
</feature>
<feature type="binding site" evidence="1">
    <location>
        <begin position="555"/>
        <end position="562"/>
    </location>
    <ligand>
        <name>ATP</name>
        <dbReference type="ChEBI" id="CHEBI:30616"/>
    </ligand>
</feature>
<feature type="modified residue" description="N-acetylglycine" evidence="10 15">
    <location>
        <position position="2"/>
    </location>
</feature>
<feature type="modified residue" description="Phosphoserine" evidence="18">
    <location>
        <position position="56"/>
    </location>
</feature>
<feature type="modified residue" description="Phosphothreonine" evidence="18">
    <location>
        <position position="117"/>
    </location>
</feature>
<feature type="modified residue" description="Phosphoserine" evidence="17">
    <location>
        <position position="199"/>
    </location>
</feature>
<feature type="modified residue" description="Phosphoserine" evidence="18">
    <location>
        <position position="224"/>
    </location>
</feature>
<feature type="modified residue" description="N6-acetyllysine" evidence="16">
    <location>
        <position position="260"/>
    </location>
</feature>
<feature type="modified residue" description="Phosphoserine" evidence="14">
    <location>
        <position position="1194"/>
    </location>
</feature>
<feature type="cross-link" description="Glycyl lysine isopeptide (Lys-Gly) (interchain with G-Cter in SUMO2)" evidence="19 20">
    <location>
        <position position="482"/>
    </location>
</feature>
<feature type="cross-link" description="Glycyl lysine isopeptide (Lys-Gly) (interchain with G-Cter in SUMO2)" evidence="20">
    <location>
        <position position="483"/>
    </location>
</feature>
<feature type="cross-link" description="Glycyl lysine isopeptide (Lys-Gly) (interchain with G-Cter in SUMO2)" evidence="20">
    <location>
        <position position="504"/>
    </location>
</feature>
<feature type="cross-link" description="Glycyl lysine isopeptide (Lys-Gly) (interchain with G-Cter in SUMO2)" evidence="20">
    <location>
        <position position="1166"/>
    </location>
</feature>
<feature type="splice variant" id="VSP_056045" description="In isoform 2." evidence="11">
    <location>
        <begin position="99"/>
        <end position="786"/>
    </location>
</feature>
<feature type="sequence variant" id="VAR_081338" description="In RP84; dbSNP:rs766053952." evidence="7">
    <original>R</original>
    <variation>Q</variation>
    <location>
        <position position="324"/>
    </location>
</feature>
<feature type="sequence variant" id="VAR_081339" description="In RP84; uncertain significance; dbSNP:rs587777554." evidence="5">
    <original>G</original>
    <variation>D</variation>
    <location>
        <position position="332"/>
    </location>
</feature>
<feature type="sequence variant" id="VAR_015518" evidence="8 9">
    <original>T</original>
    <variation>A</variation>
    <location>
        <position position="1217"/>
    </location>
</feature>
<feature type="turn" evidence="21">
    <location>
        <begin position="367"/>
        <end position="369"/>
    </location>
</feature>
<feature type="helix" evidence="21">
    <location>
        <begin position="371"/>
        <end position="384"/>
    </location>
</feature>
<feature type="turn" evidence="21">
    <location>
        <begin position="385"/>
        <end position="387"/>
    </location>
</feature>
<proteinExistence type="evidence at protein level"/>
<gene>
    <name type="primary">DHX38</name>
    <name type="synonym">DDX38</name>
    <name type="synonym">KIAA0224</name>
    <name type="synonym">PRP16</name>
</gene>
<name>PRP16_HUMAN</name>
<sequence length="1227" mass="140503">MGDTSEDASIHRLEGTDLDCQVGGLICKSKSAASEQHVFKAPAPRPSLLGLDLLASLKRREREEKDDGEDKKKSKVSSYKDWEESKDDQKDAEEEGGDQAGQNIRKDRHYRSARVETPSHPGGVSEEFWERSRQRERERREHGVYASSKEEKDWKKEKSRDRDYDRKRDRDERDRSRHSSRSERDGGSERSSRRNEPESPRHRPKDAATPSRSTWEEEDSGYGSSRRSQWESPSPTPSYRDSERSHRLSTRDRDRSVRGKYSDDTPLPTPSYKYNEWADDRRHLGSTPRLSRGRGRREEGEEGISFDTEEERQQWEDDQRQADRDWYMMDEGYDEFHNPLAYSSEDYVRRREQHLHKQKQKRISAQRRQINEDNERWETNRMLTSGVVHRLEVDEDFEEDNAAKVHLMVHNLVPPFLDGRIVFTKQPEPVIPVKDATSDLAIIARKGSQTVRKHREQKERKKAQHKHWELAGTKLGDIMGVKKEEEPDKAVTEDGKVDYRTEQKFADHMKRKSEASSEFAKKKSILEQRQYLPIFAVQQELLTIIRDNSIVIVVGETGSGKTTQLTQYLHEDGYTDYGMIGCTQPRRVAAMSVAKRVSEEMGGNLGEEVGYAIRFEDCTSENTLIKYMTDGILLRESLREADLDHYSAIIMDEAHERSLNTDVLFGLLREVVARRSDLKLIVTSATMDAEKFAAFFGNVPIFHIPGRTFPVDILFSKTPQEDYVEAAVKQSLQVHLSGAPGDILIFMPGQEDIEVTSDQIVEHLEELENAPALAVLPIYSQLPSDLQAKIFQKAPDGVRKCIVATNIAETSLTVDGIMFVIDSGYCKLKVFNPRIGMDALQIYPISQANANQRSGRAGRTGPGQCFRLYTQSAYKNELLTTTVPEIQRTNLANVVLLLKSLGVQDLLQFHFMDPPPEDNMLNSMYQLWILGALDNTGGLTSTGRLMVEFPLDPALSKMLIVSCDMGCSSEILLIVSMLSVPAIFYRPKGREEESDQIREKFAVPESDHLTYLNVYLQWKNNNYSTIWCNDHFIHAKAMRKVREVRAQLKDIMVQQRMSLASCGTDWDIVRKCICAAYFHQAAKLKGIGEYVNIRTGMPCHLHPTSSLFGMGYTPDYIVYHELVMTTKEYMQCVTAVDGEWLAELGPMFYSVKQAGKSRQENRRRAKEEASAMEEEMALAEEQLRARRQEQEKRSPLGSVRSTKIYTPGRKEQGEPMTPRRTPARFGL</sequence>
<protein>
    <recommendedName>
        <fullName>Pre-mRNA-splicing factor ATP-dependent RNA helicase PRP16</fullName>
        <ecNumber>3.6.4.13</ecNumber>
    </recommendedName>
    <alternativeName>
        <fullName>ATP-dependent RNA helicase DHX38</fullName>
    </alternativeName>
    <alternativeName>
        <fullName>DEAH box protein 38</fullName>
    </alternativeName>
</protein>
<reference key="1">
    <citation type="journal article" date="1998" name="EMBO J.">
        <title>Human homologs of yeast prp16 and prp17 reveal conservation of the mechanism for catalytic step II of pre-mRNA splicing.</title>
        <authorList>
            <person name="Zhou Z."/>
            <person name="Reed R."/>
        </authorList>
    </citation>
    <scope>NUCLEOTIDE SEQUENCE [MRNA] (ISOFORM 1)</scope>
    <scope>FUNCTION</scope>
    <scope>VARIANT ALA-1217</scope>
</reference>
<reference key="2">
    <citation type="journal article" date="1996" name="DNA Res.">
        <title>Prediction of the coding sequences of unidentified human genes. VI. The coding sequences of 80 new genes (KIAA0201-KIAA0280) deduced by analysis of cDNA clones from cell line KG-1 and brain.</title>
        <authorList>
            <person name="Nagase T."/>
            <person name="Seki N."/>
            <person name="Ishikawa K."/>
            <person name="Ohira M."/>
            <person name="Kawarabayasi Y."/>
            <person name="Ohara O."/>
            <person name="Tanaka A."/>
            <person name="Kotani H."/>
            <person name="Miyajima N."/>
            <person name="Nomura N."/>
        </authorList>
    </citation>
    <scope>NUCLEOTIDE SEQUENCE [LARGE SCALE MRNA] (ISOFORM 1)</scope>
    <scope>VARIANT ALA-1217</scope>
    <source>
        <tissue>Bone marrow</tissue>
    </source>
</reference>
<reference key="3">
    <citation type="journal article" date="1999" name="Genomics">
        <title>Genome duplications and other features in 12 Mb of DNA sequence from human chromosome 16p and 16q.</title>
        <authorList>
            <person name="Loftus B.J."/>
            <person name="Kim U.-J."/>
            <person name="Sneddon V.P."/>
            <person name="Kalush F."/>
            <person name="Brandon R."/>
            <person name="Fuhrmann J."/>
            <person name="Mason T."/>
            <person name="Crosby M.L."/>
            <person name="Barnstead M."/>
            <person name="Cronin L."/>
            <person name="Mays A.D."/>
            <person name="Cao Y."/>
            <person name="Xu R.X."/>
            <person name="Kang H.-L."/>
            <person name="Mitchell S."/>
            <person name="Eichler E.E."/>
            <person name="Harris P.C."/>
            <person name="Venter J.C."/>
            <person name="Adams M.D."/>
        </authorList>
    </citation>
    <scope>NUCLEOTIDE SEQUENCE [LARGE SCALE GENOMIC DNA]</scope>
</reference>
<reference key="4">
    <citation type="journal article" date="2004" name="Nat. Genet.">
        <title>Complete sequencing and characterization of 21,243 full-length human cDNAs.</title>
        <authorList>
            <person name="Ota T."/>
            <person name="Suzuki Y."/>
            <person name="Nishikawa T."/>
            <person name="Otsuki T."/>
            <person name="Sugiyama T."/>
            <person name="Irie R."/>
            <person name="Wakamatsu A."/>
            <person name="Hayashi K."/>
            <person name="Sato H."/>
            <person name="Nagai K."/>
            <person name="Kimura K."/>
            <person name="Makita H."/>
            <person name="Sekine M."/>
            <person name="Obayashi M."/>
            <person name="Nishi T."/>
            <person name="Shibahara T."/>
            <person name="Tanaka T."/>
            <person name="Ishii S."/>
            <person name="Yamamoto J."/>
            <person name="Saito K."/>
            <person name="Kawai Y."/>
            <person name="Isono Y."/>
            <person name="Nakamura Y."/>
            <person name="Nagahari K."/>
            <person name="Murakami K."/>
            <person name="Yasuda T."/>
            <person name="Iwayanagi T."/>
            <person name="Wagatsuma M."/>
            <person name="Shiratori A."/>
            <person name="Sudo H."/>
            <person name="Hosoiri T."/>
            <person name="Kaku Y."/>
            <person name="Kodaira H."/>
            <person name="Kondo H."/>
            <person name="Sugawara M."/>
            <person name="Takahashi M."/>
            <person name="Kanda K."/>
            <person name="Yokoi T."/>
            <person name="Furuya T."/>
            <person name="Kikkawa E."/>
            <person name="Omura Y."/>
            <person name="Abe K."/>
            <person name="Kamihara K."/>
            <person name="Katsuta N."/>
            <person name="Sato K."/>
            <person name="Tanikawa M."/>
            <person name="Yamazaki M."/>
            <person name="Ninomiya K."/>
            <person name="Ishibashi T."/>
            <person name="Yamashita H."/>
            <person name="Murakawa K."/>
            <person name="Fujimori K."/>
            <person name="Tanai H."/>
            <person name="Kimata M."/>
            <person name="Watanabe M."/>
            <person name="Hiraoka S."/>
            <person name="Chiba Y."/>
            <person name="Ishida S."/>
            <person name="Ono Y."/>
            <person name="Takiguchi S."/>
            <person name="Watanabe S."/>
            <person name="Yosida M."/>
            <person name="Hotuta T."/>
            <person name="Kusano J."/>
            <person name="Kanehori K."/>
            <person name="Takahashi-Fujii A."/>
            <person name="Hara H."/>
            <person name="Tanase T.-O."/>
            <person name="Nomura Y."/>
            <person name="Togiya S."/>
            <person name="Komai F."/>
            <person name="Hara R."/>
            <person name="Takeuchi K."/>
            <person name="Arita M."/>
            <person name="Imose N."/>
            <person name="Musashino K."/>
            <person name="Yuuki H."/>
            <person name="Oshima A."/>
            <person name="Sasaki N."/>
            <person name="Aotsuka S."/>
            <person name="Yoshikawa Y."/>
            <person name="Matsunawa H."/>
            <person name="Ichihara T."/>
            <person name="Shiohata N."/>
            <person name="Sano S."/>
            <person name="Moriya S."/>
            <person name="Momiyama H."/>
            <person name="Satoh N."/>
            <person name="Takami S."/>
            <person name="Terashima Y."/>
            <person name="Suzuki O."/>
            <person name="Nakagawa S."/>
            <person name="Senoh A."/>
            <person name="Mizoguchi H."/>
            <person name="Goto Y."/>
            <person name="Shimizu F."/>
            <person name="Wakebe H."/>
            <person name="Hishigaki H."/>
            <person name="Watanabe T."/>
            <person name="Sugiyama A."/>
            <person name="Takemoto M."/>
            <person name="Kawakami B."/>
            <person name="Yamazaki M."/>
            <person name="Watanabe K."/>
            <person name="Kumagai A."/>
            <person name="Itakura S."/>
            <person name="Fukuzumi Y."/>
            <person name="Fujimori Y."/>
            <person name="Komiyama M."/>
            <person name="Tashiro H."/>
            <person name="Tanigami A."/>
            <person name="Fujiwara T."/>
            <person name="Ono T."/>
            <person name="Yamada K."/>
            <person name="Fujii Y."/>
            <person name="Ozaki K."/>
            <person name="Hirao M."/>
            <person name="Ohmori Y."/>
            <person name="Kawabata A."/>
            <person name="Hikiji T."/>
            <person name="Kobatake N."/>
            <person name="Inagaki H."/>
            <person name="Ikema Y."/>
            <person name="Okamoto S."/>
            <person name="Okitani R."/>
            <person name="Kawakami T."/>
            <person name="Noguchi S."/>
            <person name="Itoh T."/>
            <person name="Shigeta K."/>
            <person name="Senba T."/>
            <person name="Matsumura K."/>
            <person name="Nakajima Y."/>
            <person name="Mizuno T."/>
            <person name="Morinaga M."/>
            <person name="Sasaki M."/>
            <person name="Togashi T."/>
            <person name="Oyama M."/>
            <person name="Hata H."/>
            <person name="Watanabe M."/>
            <person name="Komatsu T."/>
            <person name="Mizushima-Sugano J."/>
            <person name="Satoh T."/>
            <person name="Shirai Y."/>
            <person name="Takahashi Y."/>
            <person name="Nakagawa K."/>
            <person name="Okumura K."/>
            <person name="Nagase T."/>
            <person name="Nomura N."/>
            <person name="Kikuchi H."/>
            <person name="Masuho Y."/>
            <person name="Yamashita R."/>
            <person name="Nakai K."/>
            <person name="Yada T."/>
            <person name="Nakamura Y."/>
            <person name="Ohara O."/>
            <person name="Isogai T."/>
            <person name="Sugano S."/>
        </authorList>
    </citation>
    <scope>NUCLEOTIDE SEQUENCE [LARGE SCALE MRNA] (ISOFORM 2)</scope>
    <source>
        <tissue>Spleen</tissue>
    </source>
</reference>
<reference key="5">
    <citation type="journal article" date="2004" name="Nature">
        <title>The sequence and analysis of duplication-rich human chromosome 16.</title>
        <authorList>
            <person name="Martin J."/>
            <person name="Han C."/>
            <person name="Gordon L.A."/>
            <person name="Terry A."/>
            <person name="Prabhakar S."/>
            <person name="She X."/>
            <person name="Xie G."/>
            <person name="Hellsten U."/>
            <person name="Chan Y.M."/>
            <person name="Altherr M."/>
            <person name="Couronne O."/>
            <person name="Aerts A."/>
            <person name="Bajorek E."/>
            <person name="Black S."/>
            <person name="Blumer H."/>
            <person name="Branscomb E."/>
            <person name="Brown N.C."/>
            <person name="Bruno W.J."/>
            <person name="Buckingham J.M."/>
            <person name="Callen D.F."/>
            <person name="Campbell C.S."/>
            <person name="Campbell M.L."/>
            <person name="Campbell E.W."/>
            <person name="Caoile C."/>
            <person name="Challacombe J.F."/>
            <person name="Chasteen L.A."/>
            <person name="Chertkov O."/>
            <person name="Chi H.C."/>
            <person name="Christensen M."/>
            <person name="Clark L.M."/>
            <person name="Cohn J.D."/>
            <person name="Denys M."/>
            <person name="Detter J.C."/>
            <person name="Dickson M."/>
            <person name="Dimitrijevic-Bussod M."/>
            <person name="Escobar J."/>
            <person name="Fawcett J.J."/>
            <person name="Flowers D."/>
            <person name="Fotopulos D."/>
            <person name="Glavina T."/>
            <person name="Gomez M."/>
            <person name="Gonzales E."/>
            <person name="Goodstein D."/>
            <person name="Goodwin L.A."/>
            <person name="Grady D.L."/>
            <person name="Grigoriev I."/>
            <person name="Groza M."/>
            <person name="Hammon N."/>
            <person name="Hawkins T."/>
            <person name="Haydu L."/>
            <person name="Hildebrand C.E."/>
            <person name="Huang W."/>
            <person name="Israni S."/>
            <person name="Jett J."/>
            <person name="Jewett P.B."/>
            <person name="Kadner K."/>
            <person name="Kimball H."/>
            <person name="Kobayashi A."/>
            <person name="Krawczyk M.-C."/>
            <person name="Leyba T."/>
            <person name="Longmire J.L."/>
            <person name="Lopez F."/>
            <person name="Lou Y."/>
            <person name="Lowry S."/>
            <person name="Ludeman T."/>
            <person name="Manohar C.F."/>
            <person name="Mark G.A."/>
            <person name="McMurray K.L."/>
            <person name="Meincke L.J."/>
            <person name="Morgan J."/>
            <person name="Moyzis R.K."/>
            <person name="Mundt M.O."/>
            <person name="Munk A.C."/>
            <person name="Nandkeshwar R.D."/>
            <person name="Pitluck S."/>
            <person name="Pollard M."/>
            <person name="Predki P."/>
            <person name="Parson-Quintana B."/>
            <person name="Ramirez L."/>
            <person name="Rash S."/>
            <person name="Retterer J."/>
            <person name="Ricke D.O."/>
            <person name="Robinson D.L."/>
            <person name="Rodriguez A."/>
            <person name="Salamov A."/>
            <person name="Saunders E.H."/>
            <person name="Scott D."/>
            <person name="Shough T."/>
            <person name="Stallings R.L."/>
            <person name="Stalvey M."/>
            <person name="Sutherland R.D."/>
            <person name="Tapia R."/>
            <person name="Tesmer J.G."/>
            <person name="Thayer N."/>
            <person name="Thompson L.S."/>
            <person name="Tice H."/>
            <person name="Torney D.C."/>
            <person name="Tran-Gyamfi M."/>
            <person name="Tsai M."/>
            <person name="Ulanovsky L.E."/>
            <person name="Ustaszewska A."/>
            <person name="Vo N."/>
            <person name="White P.S."/>
            <person name="Williams A.L."/>
            <person name="Wills P.L."/>
            <person name="Wu J.-R."/>
            <person name="Wu K."/>
            <person name="Yang J."/>
            <person name="DeJong P."/>
            <person name="Bruce D."/>
            <person name="Doggett N.A."/>
            <person name="Deaven L."/>
            <person name="Schmutz J."/>
            <person name="Grimwood J."/>
            <person name="Richardson P."/>
            <person name="Rokhsar D.S."/>
            <person name="Eichler E.E."/>
            <person name="Gilna P."/>
            <person name="Lucas S.M."/>
            <person name="Myers R.M."/>
            <person name="Rubin E.M."/>
            <person name="Pennacchio L.A."/>
        </authorList>
    </citation>
    <scope>NUCLEOTIDE SEQUENCE [LARGE SCALE GENOMIC DNA]</scope>
</reference>
<reference key="6">
    <citation type="submission" date="2005-09" db="EMBL/GenBank/DDBJ databases">
        <authorList>
            <person name="Mural R.J."/>
            <person name="Istrail S."/>
            <person name="Sutton G.G."/>
            <person name="Florea L."/>
            <person name="Halpern A.L."/>
            <person name="Mobarry C.M."/>
            <person name="Lippert R."/>
            <person name="Walenz B."/>
            <person name="Shatkay H."/>
            <person name="Dew I."/>
            <person name="Miller J.R."/>
            <person name="Flanigan M.J."/>
            <person name="Edwards N.J."/>
            <person name="Bolanos R."/>
            <person name="Fasulo D."/>
            <person name="Halldorsson B.V."/>
            <person name="Hannenhalli S."/>
            <person name="Turner R."/>
            <person name="Yooseph S."/>
            <person name="Lu F."/>
            <person name="Nusskern D.R."/>
            <person name="Shue B.C."/>
            <person name="Zheng X.H."/>
            <person name="Zhong F."/>
            <person name="Delcher A.L."/>
            <person name="Huson D.H."/>
            <person name="Kravitz S.A."/>
            <person name="Mouchard L."/>
            <person name="Reinert K."/>
            <person name="Remington K.A."/>
            <person name="Clark A.G."/>
            <person name="Waterman M.S."/>
            <person name="Eichler E.E."/>
            <person name="Adams M.D."/>
            <person name="Hunkapiller M.W."/>
            <person name="Myers E.W."/>
            <person name="Venter J.C."/>
        </authorList>
    </citation>
    <scope>NUCLEOTIDE SEQUENCE [LARGE SCALE GENOMIC DNA]</scope>
</reference>
<reference key="7">
    <citation type="journal article" date="2004" name="Genome Res.">
        <title>The status, quality, and expansion of the NIH full-length cDNA project: the Mammalian Gene Collection (MGC).</title>
        <authorList>
            <consortium name="The MGC Project Team"/>
        </authorList>
    </citation>
    <scope>NUCLEOTIDE SEQUENCE [LARGE SCALE MRNA] (ISOFORM 1)</scope>
    <source>
        <tissue>Brain</tissue>
        <tissue>Placenta</tissue>
    </source>
</reference>
<reference key="8">
    <citation type="submission" date="2008-12" db="UniProtKB">
        <authorList>
            <person name="Bienvenut W.V."/>
            <person name="Lilla S."/>
            <person name="von Kriegsheim A."/>
            <person name="Lempens A."/>
            <person name="Kolch W."/>
        </authorList>
    </citation>
    <scope>PROTEIN SEQUENCE OF 2-12 AND 692-707</scope>
    <scope>CLEAVAGE OF INITIATOR METHIONINE</scope>
    <scope>ACETYLATION AT GLY-2</scope>
    <scope>IDENTIFICATION BY MASS SPECTROMETRY</scope>
    <source>
        <tissue>Ovarian carcinoma</tissue>
    </source>
</reference>
<reference key="9">
    <citation type="journal article" date="2002" name="RNA">
        <title>Purification and characterization of native spliceosomes suitable for three-dimensional structural analysis.</title>
        <authorList>
            <person name="Jurica M.S."/>
            <person name="Licklider L.J."/>
            <person name="Gygi S.P."/>
            <person name="Grigorieff N."/>
            <person name="Moore M.J."/>
        </authorList>
    </citation>
    <scope>IDENTIFICATION BY MASS SPECTROMETRY</scope>
    <scope>IDENTIFICATION IN THE SPLICEOSOMAL C COMPLEX</scope>
</reference>
<reference key="10">
    <citation type="journal article" date="2008" name="Proc. Natl. Acad. Sci. U.S.A.">
        <title>A quantitative atlas of mitotic phosphorylation.</title>
        <authorList>
            <person name="Dephoure N."/>
            <person name="Zhou C."/>
            <person name="Villen J."/>
            <person name="Beausoleil S.A."/>
            <person name="Bakalarski C.E."/>
            <person name="Elledge S.J."/>
            <person name="Gygi S.P."/>
        </authorList>
    </citation>
    <scope>PHOSPHORYLATION [LARGE SCALE ANALYSIS] AT SER-1194</scope>
    <scope>IDENTIFICATION BY MASS SPECTROMETRY [LARGE SCALE ANALYSIS]</scope>
    <source>
        <tissue>Cervix carcinoma</tissue>
    </source>
</reference>
<reference key="11">
    <citation type="journal article" date="2009" name="Anal. Chem.">
        <title>Lys-N and trypsin cover complementary parts of the phosphoproteome in a refined SCX-based approach.</title>
        <authorList>
            <person name="Gauci S."/>
            <person name="Helbig A.O."/>
            <person name="Slijper M."/>
            <person name="Krijgsveld J."/>
            <person name="Heck A.J."/>
            <person name="Mohammed S."/>
        </authorList>
    </citation>
    <scope>ACETYLATION [LARGE SCALE ANALYSIS] AT GLY-2</scope>
    <scope>CLEAVAGE OF INITIATOR METHIONINE [LARGE SCALE ANALYSIS]</scope>
    <scope>IDENTIFICATION BY MASS SPECTROMETRY [LARGE SCALE ANALYSIS]</scope>
</reference>
<reference key="12">
    <citation type="journal article" date="2009" name="Science">
        <title>Lysine acetylation targets protein complexes and co-regulates major cellular functions.</title>
        <authorList>
            <person name="Choudhary C."/>
            <person name="Kumar C."/>
            <person name="Gnad F."/>
            <person name="Nielsen M.L."/>
            <person name="Rehman M."/>
            <person name="Walther T.C."/>
            <person name="Olsen J.V."/>
            <person name="Mann M."/>
        </authorList>
    </citation>
    <scope>ACETYLATION [LARGE SCALE ANALYSIS] AT LYS-260</scope>
    <scope>IDENTIFICATION BY MASS SPECTROMETRY [LARGE SCALE ANALYSIS]</scope>
</reference>
<reference key="13">
    <citation type="journal article" date="2010" name="Sci. Signal.">
        <title>Quantitative phosphoproteomics reveals widespread full phosphorylation site occupancy during mitosis.</title>
        <authorList>
            <person name="Olsen J.V."/>
            <person name="Vermeulen M."/>
            <person name="Santamaria A."/>
            <person name="Kumar C."/>
            <person name="Miller M.L."/>
            <person name="Jensen L.J."/>
            <person name="Gnad F."/>
            <person name="Cox J."/>
            <person name="Jensen T.S."/>
            <person name="Nigg E.A."/>
            <person name="Brunak S."/>
            <person name="Mann M."/>
        </authorList>
    </citation>
    <scope>PHOSPHORYLATION [LARGE SCALE ANALYSIS] AT SER-199</scope>
    <scope>IDENTIFICATION BY MASS SPECTROMETRY [LARGE SCALE ANALYSIS]</scope>
    <source>
        <tissue>Cervix carcinoma</tissue>
    </source>
</reference>
<reference key="14">
    <citation type="journal article" date="2011" name="BMC Syst. Biol.">
        <title>Initial characterization of the human central proteome.</title>
        <authorList>
            <person name="Burkard T.R."/>
            <person name="Planyavsky M."/>
            <person name="Kaupe I."/>
            <person name="Breitwieser F.P."/>
            <person name="Buerckstuemmer T."/>
            <person name="Bennett K.L."/>
            <person name="Superti-Furga G."/>
            <person name="Colinge J."/>
        </authorList>
    </citation>
    <scope>IDENTIFICATION BY MASS SPECTROMETRY [LARGE SCALE ANALYSIS]</scope>
</reference>
<reference key="15">
    <citation type="journal article" date="2013" name="J. Proteome Res.">
        <title>Toward a comprehensive characterization of a human cancer cell phosphoproteome.</title>
        <authorList>
            <person name="Zhou H."/>
            <person name="Di Palma S."/>
            <person name="Preisinger C."/>
            <person name="Peng M."/>
            <person name="Polat A.N."/>
            <person name="Heck A.J."/>
            <person name="Mohammed S."/>
        </authorList>
    </citation>
    <scope>PHOSPHORYLATION [LARGE SCALE ANALYSIS] AT SER-56; THR-117 AND SER-224</scope>
    <scope>IDENTIFICATION BY MASS SPECTROMETRY [LARGE SCALE ANALYSIS]</scope>
    <source>
        <tissue>Cervix carcinoma</tissue>
        <tissue>Erythroleukemia</tissue>
    </source>
</reference>
<reference key="16">
    <citation type="journal article" date="2014" name="J. Med. Genet.">
        <title>A missense mutation in the splicing factor gene DHX38 is associated with early-onset retinitis pigmentosa with macular coloboma.</title>
        <authorList>
            <person name="Ajmal M."/>
            <person name="Khan M.I."/>
            <person name="Neveling K."/>
            <person name="Khan Y.M."/>
            <person name="Azam M."/>
            <person name="Waheed N.K."/>
            <person name="Hamel C.P."/>
            <person name="Ben-Yosef T."/>
            <person name="De Baere E."/>
            <person name="Koenekoop R.K."/>
            <person name="Collin R.W."/>
            <person name="Qamar R."/>
            <person name="Cremers F.P."/>
        </authorList>
    </citation>
    <scope>INVOLVEMENT IN RP84</scope>
    <scope>VARIANT RP84 ASP-332</scope>
</reference>
<reference key="17">
    <citation type="journal article" date="2015" name="Mol. Cell. Proteomics">
        <title>System-wide analysis of SUMOylation dynamics in response to replication stress reveals novel small ubiquitin-like modified target proteins and acceptor lysines relevant for genome stability.</title>
        <authorList>
            <person name="Xiao Z."/>
            <person name="Chang J.G."/>
            <person name="Hendriks I.A."/>
            <person name="Sigurdsson J.O."/>
            <person name="Olsen J.V."/>
            <person name="Vertegaal A.C."/>
        </authorList>
    </citation>
    <scope>SUMOYLATION [LARGE SCALE ANALYSIS] AT LYS-482</scope>
    <scope>IDENTIFICATION BY MASS SPECTROMETRY [LARGE SCALE ANALYSIS]</scope>
</reference>
<reference key="18">
    <citation type="journal article" date="2017" name="Nat. Struct. Mol. Biol.">
        <title>Site-specific mapping of the human SUMO proteome reveals co-modification with phosphorylation.</title>
        <authorList>
            <person name="Hendriks I.A."/>
            <person name="Lyon D."/>
            <person name="Young C."/>
            <person name="Jensen L.J."/>
            <person name="Vertegaal A.C."/>
            <person name="Nielsen M.L."/>
        </authorList>
    </citation>
    <scope>SUMOYLATION [LARGE SCALE ANALYSIS] AT LYS-482; LYS-483; LYS-504 AND LYS-1166</scope>
    <scope>IDENTIFICATION BY MASS SPECTROMETRY [LARGE SCALE ANALYSIS]</scope>
</reference>
<reference key="19">
    <citation type="journal article" date="2018" name="Invest. Ophthalmol. Vis. Sci.">
        <title>Confirmation of the role of DHX38 in the etiology of early-onset retinitis pigmentosa.</title>
        <authorList>
            <consortium name="University of Washington Center for Mendelian Genomics (UWCMG) Study Group"/>
            <person name="Latif Z."/>
            <person name="Chakchouk I."/>
            <person name="Schrauwen I."/>
            <person name="Lee K."/>
            <person name="Santos-Cortez R.L.P."/>
            <person name="Abbe I."/>
            <person name="Acharya A."/>
            <person name="Jarral A."/>
            <person name="Ali I."/>
            <person name="Ullah E."/>
            <person name="Khan M.N."/>
            <person name="Ali G."/>
            <person name="Tahir T.H."/>
            <person name="Bamshad M.J."/>
            <person name="Nickerson D.A."/>
            <person name="Ahmad W."/>
            <person name="Ansar M."/>
            <person name="Leal S.M."/>
        </authorList>
    </citation>
    <scope>INVOLVEMENT IN RP84</scope>
    <scope>VARIANT RP84 GLN-324</scope>
</reference>
<reference evidence="13" key="20">
    <citation type="journal article" date="2018" name="Science">
        <title>Structure of a human catalytic step I spliceosome.</title>
        <authorList>
            <person name="Zhan X."/>
            <person name="Yan C."/>
            <person name="Zhang X."/>
            <person name="Lei J."/>
            <person name="Shi Y."/>
        </authorList>
    </citation>
    <scope>STRUCTURE BY ELECTRON MICROSCOPY (4.10 ANGSTROMS)</scope>
    <scope>FUNCTION</scope>
    <scope>SUBUNIT</scope>
    <scope>SUBCELLULAR LOCATION</scope>
</reference>
<organism>
    <name type="scientific">Homo sapiens</name>
    <name type="common">Human</name>
    <dbReference type="NCBI Taxonomy" id="9606"/>
    <lineage>
        <taxon>Eukaryota</taxon>
        <taxon>Metazoa</taxon>
        <taxon>Chordata</taxon>
        <taxon>Craniata</taxon>
        <taxon>Vertebrata</taxon>
        <taxon>Euteleostomi</taxon>
        <taxon>Mammalia</taxon>
        <taxon>Eutheria</taxon>
        <taxon>Euarchontoglires</taxon>
        <taxon>Primates</taxon>
        <taxon>Haplorrhini</taxon>
        <taxon>Catarrhini</taxon>
        <taxon>Hominidae</taxon>
        <taxon>Homo</taxon>
    </lineage>
</organism>
<dbReference type="EC" id="3.6.4.13"/>
<dbReference type="EMBL" id="AF038391">
    <property type="protein sequence ID" value="AAC39729.1"/>
    <property type="molecule type" value="mRNA"/>
</dbReference>
<dbReference type="EMBL" id="D86977">
    <property type="protein sequence ID" value="BAA13213.2"/>
    <property type="status" value="ALT_INIT"/>
    <property type="molecule type" value="mRNA"/>
</dbReference>
<dbReference type="EMBL" id="AK301074">
    <property type="protein sequence ID" value="BAG62680.1"/>
    <property type="molecule type" value="mRNA"/>
</dbReference>
<dbReference type="EMBL" id="AC009087">
    <property type="status" value="NOT_ANNOTATED_CDS"/>
    <property type="molecule type" value="Genomic_DNA"/>
</dbReference>
<dbReference type="EMBL" id="AC004682">
    <property type="protein sequence ID" value="AAC27431.1"/>
    <property type="molecule type" value="Genomic_DNA"/>
</dbReference>
<dbReference type="EMBL" id="CH471166">
    <property type="protein sequence ID" value="EAW59180.1"/>
    <property type="molecule type" value="Genomic_DNA"/>
</dbReference>
<dbReference type="EMBL" id="CH471166">
    <property type="protein sequence ID" value="EAW59190.1"/>
    <property type="molecule type" value="Genomic_DNA"/>
</dbReference>
<dbReference type="EMBL" id="BC004235">
    <property type="protein sequence ID" value="AAH04235.1"/>
    <property type="molecule type" value="mRNA"/>
</dbReference>
<dbReference type="EMBL" id="BC008340">
    <property type="protein sequence ID" value="AAH08340.1"/>
    <property type="molecule type" value="mRNA"/>
</dbReference>
<dbReference type="CCDS" id="CCDS10907.1">
    <molecule id="Q92620-1"/>
</dbReference>
<dbReference type="RefSeq" id="NP_054722.2">
    <molecule id="Q92620-1"/>
    <property type="nucleotide sequence ID" value="NM_014003.3"/>
</dbReference>
<dbReference type="RefSeq" id="XP_011521786.1">
    <molecule id="Q92620-1"/>
    <property type="nucleotide sequence ID" value="XM_011523484.3"/>
</dbReference>
<dbReference type="RefSeq" id="XP_011521787.1">
    <property type="nucleotide sequence ID" value="XM_011523485.1"/>
</dbReference>
<dbReference type="RefSeq" id="XP_047290941.1">
    <molecule id="Q92620-1"/>
    <property type="nucleotide sequence ID" value="XM_047434985.1"/>
</dbReference>
<dbReference type="RefSeq" id="XP_054170516.1">
    <molecule id="Q92620-1"/>
    <property type="nucleotide sequence ID" value="XM_054314541.1"/>
</dbReference>
<dbReference type="PDB" id="5YZG">
    <property type="method" value="EM"/>
    <property type="resolution" value="4.10 A"/>
    <property type="chains" value="Z=1-1227"/>
</dbReference>
<dbReference type="PDB" id="6ZYM">
    <property type="method" value="EM"/>
    <property type="resolution" value="3.40 A"/>
    <property type="chains" value="r=1-1227"/>
</dbReference>
<dbReference type="PDB" id="7A5P">
    <property type="method" value="EM"/>
    <property type="resolution" value="5.00 A"/>
    <property type="chains" value="r=1-1227"/>
</dbReference>
<dbReference type="PDB" id="8I0W">
    <property type="method" value="EM"/>
    <property type="resolution" value="3.40 A"/>
    <property type="chains" value="Z=1-1227"/>
</dbReference>
<dbReference type="PDBsum" id="5YZG"/>
<dbReference type="PDBsum" id="6ZYM"/>
<dbReference type="PDBsum" id="7A5P"/>
<dbReference type="PDBsum" id="8I0W"/>
<dbReference type="BMRB" id="Q92620"/>
<dbReference type="EMDB" id="EMD-11569"/>
<dbReference type="EMDB" id="EMD-35113"/>
<dbReference type="EMDB" id="EMD-6864"/>
<dbReference type="SMR" id="Q92620"/>
<dbReference type="BioGRID" id="115129">
    <property type="interactions" value="181"/>
</dbReference>
<dbReference type="CORUM" id="Q92620"/>
<dbReference type="FunCoup" id="Q92620">
    <property type="interactions" value="3434"/>
</dbReference>
<dbReference type="IntAct" id="Q92620">
    <property type="interactions" value="78"/>
</dbReference>
<dbReference type="MINT" id="Q92620"/>
<dbReference type="STRING" id="9606.ENSP00000268482"/>
<dbReference type="GlyGen" id="Q92620">
    <property type="glycosylation" value="5 sites, 1 O-linked glycan (2 sites)"/>
</dbReference>
<dbReference type="iPTMnet" id="Q92620"/>
<dbReference type="MetOSite" id="Q92620"/>
<dbReference type="PhosphoSitePlus" id="Q92620"/>
<dbReference type="BioMuta" id="DHX38"/>
<dbReference type="DMDM" id="85700389"/>
<dbReference type="jPOST" id="Q92620"/>
<dbReference type="MassIVE" id="Q92620"/>
<dbReference type="PaxDb" id="9606-ENSP00000268482"/>
<dbReference type="PeptideAtlas" id="Q92620"/>
<dbReference type="ProteomicsDB" id="5268"/>
<dbReference type="ProteomicsDB" id="75373">
    <molecule id="Q92620-1"/>
</dbReference>
<dbReference type="Pumba" id="Q92620"/>
<dbReference type="Antibodypedia" id="16682">
    <property type="antibodies" value="138 antibodies from 27 providers"/>
</dbReference>
<dbReference type="DNASU" id="9785"/>
<dbReference type="Ensembl" id="ENST00000268482.8">
    <molecule id="Q92620-1"/>
    <property type="protein sequence ID" value="ENSP00000268482.3"/>
    <property type="gene ID" value="ENSG00000140829.12"/>
</dbReference>
<dbReference type="GeneID" id="9785"/>
<dbReference type="KEGG" id="hsa:9785"/>
<dbReference type="MANE-Select" id="ENST00000268482.8">
    <property type="protein sequence ID" value="ENSP00000268482.3"/>
    <property type="RefSeq nucleotide sequence ID" value="NM_014003.4"/>
    <property type="RefSeq protein sequence ID" value="NP_054722.2"/>
</dbReference>
<dbReference type="UCSC" id="uc002fcb.4">
    <molecule id="Q92620-1"/>
    <property type="organism name" value="human"/>
</dbReference>
<dbReference type="AGR" id="HGNC:17211"/>
<dbReference type="CTD" id="9785"/>
<dbReference type="DisGeNET" id="9785"/>
<dbReference type="GeneCards" id="DHX38"/>
<dbReference type="HGNC" id="HGNC:17211">
    <property type="gene designation" value="DHX38"/>
</dbReference>
<dbReference type="HPA" id="ENSG00000140829">
    <property type="expression patterns" value="Low tissue specificity"/>
</dbReference>
<dbReference type="MalaCards" id="DHX38"/>
<dbReference type="MIM" id="605584">
    <property type="type" value="gene"/>
</dbReference>
<dbReference type="MIM" id="618220">
    <property type="type" value="phenotype"/>
</dbReference>
<dbReference type="neXtProt" id="NX_Q92620"/>
<dbReference type="OpenTargets" id="ENSG00000140829"/>
<dbReference type="Orphanet" id="791">
    <property type="disease" value="Retinitis pigmentosa"/>
</dbReference>
<dbReference type="PharmGKB" id="PA27225"/>
<dbReference type="VEuPathDB" id="HostDB:ENSG00000140829"/>
<dbReference type="eggNOG" id="KOG0924">
    <property type="taxonomic scope" value="Eukaryota"/>
</dbReference>
<dbReference type="GeneTree" id="ENSGT00940000156898"/>
<dbReference type="HOGENOM" id="CLU_001832_6_2_1"/>
<dbReference type="InParanoid" id="Q92620"/>
<dbReference type="OMA" id="VDVMFHR"/>
<dbReference type="OrthoDB" id="10253254at2759"/>
<dbReference type="PAN-GO" id="Q92620">
    <property type="GO annotations" value="4 GO annotations based on evolutionary models"/>
</dbReference>
<dbReference type="PhylomeDB" id="Q92620"/>
<dbReference type="TreeFam" id="TF105793"/>
<dbReference type="PathwayCommons" id="Q92620"/>
<dbReference type="Reactome" id="R-HSA-159236">
    <property type="pathway name" value="Transport of Mature mRNA derived from an Intron-Containing Transcript"/>
</dbReference>
<dbReference type="Reactome" id="R-HSA-72163">
    <property type="pathway name" value="mRNA Splicing - Major Pathway"/>
</dbReference>
<dbReference type="Reactome" id="R-HSA-72187">
    <property type="pathway name" value="mRNA 3'-end processing"/>
</dbReference>
<dbReference type="Reactome" id="R-HSA-73856">
    <property type="pathway name" value="RNA Polymerase II Transcription Termination"/>
</dbReference>
<dbReference type="SignaLink" id="Q92620"/>
<dbReference type="BioGRID-ORCS" id="9785">
    <property type="hits" value="406 hits in 1171 CRISPR screens"/>
</dbReference>
<dbReference type="ChiTaRS" id="DHX38">
    <property type="organism name" value="human"/>
</dbReference>
<dbReference type="GeneWiki" id="DHX38"/>
<dbReference type="GenomeRNAi" id="9785"/>
<dbReference type="Pharos" id="Q92620">
    <property type="development level" value="Tbio"/>
</dbReference>
<dbReference type="PRO" id="PR:Q92620"/>
<dbReference type="Proteomes" id="UP000005640">
    <property type="component" value="Chromosome 16"/>
</dbReference>
<dbReference type="RNAct" id="Q92620">
    <property type="molecule type" value="protein"/>
</dbReference>
<dbReference type="Bgee" id="ENSG00000140829">
    <property type="expression patterns" value="Expressed in sural nerve and 168 other cell types or tissues"/>
</dbReference>
<dbReference type="ExpressionAtlas" id="Q92620">
    <property type="expression patterns" value="baseline and differential"/>
</dbReference>
<dbReference type="GO" id="GO:0071013">
    <property type="term" value="C:catalytic step 2 spliceosome"/>
    <property type="evidence" value="ECO:0000314"/>
    <property type="project" value="UniProtKB"/>
</dbReference>
<dbReference type="GO" id="GO:0016020">
    <property type="term" value="C:membrane"/>
    <property type="evidence" value="ECO:0007005"/>
    <property type="project" value="UniProtKB"/>
</dbReference>
<dbReference type="GO" id="GO:0005654">
    <property type="term" value="C:nucleoplasm"/>
    <property type="evidence" value="ECO:0000304"/>
    <property type="project" value="Reactome"/>
</dbReference>
<dbReference type="GO" id="GO:0005634">
    <property type="term" value="C:nucleus"/>
    <property type="evidence" value="ECO:0000303"/>
    <property type="project" value="UniProtKB"/>
</dbReference>
<dbReference type="GO" id="GO:0005681">
    <property type="term" value="C:spliceosomal complex"/>
    <property type="evidence" value="ECO:0000318"/>
    <property type="project" value="GO_Central"/>
</dbReference>
<dbReference type="GO" id="GO:0034458">
    <property type="term" value="F:3'-5' RNA helicase activity"/>
    <property type="evidence" value="ECO:0000318"/>
    <property type="project" value="GO_Central"/>
</dbReference>
<dbReference type="GO" id="GO:0005524">
    <property type="term" value="F:ATP binding"/>
    <property type="evidence" value="ECO:0007669"/>
    <property type="project" value="UniProtKB-KW"/>
</dbReference>
<dbReference type="GO" id="GO:0016887">
    <property type="term" value="F:ATP hydrolysis activity"/>
    <property type="evidence" value="ECO:0007669"/>
    <property type="project" value="RHEA"/>
</dbReference>
<dbReference type="GO" id="GO:0003723">
    <property type="term" value="F:RNA binding"/>
    <property type="evidence" value="ECO:0007005"/>
    <property type="project" value="UniProtKB"/>
</dbReference>
<dbReference type="GO" id="GO:0003724">
    <property type="term" value="F:RNA helicase activity"/>
    <property type="evidence" value="ECO:0000304"/>
    <property type="project" value="Reactome"/>
</dbReference>
<dbReference type="GO" id="GO:0000398">
    <property type="term" value="P:mRNA splicing, via spliceosome"/>
    <property type="evidence" value="ECO:0000314"/>
    <property type="project" value="UniProtKB"/>
</dbReference>
<dbReference type="CDD" id="cd17983">
    <property type="entry name" value="DEXHc_DHX38"/>
    <property type="match status" value="1"/>
</dbReference>
<dbReference type="CDD" id="cd18791">
    <property type="entry name" value="SF2_C_RHA"/>
    <property type="match status" value="1"/>
</dbReference>
<dbReference type="FunFam" id="1.20.120.1080:FF:000001">
    <property type="entry name" value="Pre-mRNA-splicing factor ATP-dependent RNA helicase"/>
    <property type="match status" value="1"/>
</dbReference>
<dbReference type="FunFam" id="3.40.50.300:FF:000313">
    <property type="entry name" value="Pre-mRNA-splicing factor ATP-dependent RNA helicase PRP16"/>
    <property type="match status" value="1"/>
</dbReference>
<dbReference type="FunFam" id="3.40.50.300:FF:004736">
    <property type="entry name" value="Pre-mRNA-splicing factor ATP-dependent RNA helicase PRP16"/>
    <property type="match status" value="1"/>
</dbReference>
<dbReference type="Gene3D" id="1.20.120.1080">
    <property type="match status" value="1"/>
</dbReference>
<dbReference type="Gene3D" id="3.40.50.300">
    <property type="entry name" value="P-loop containing nucleotide triphosphate hydrolases"/>
    <property type="match status" value="2"/>
</dbReference>
<dbReference type="InterPro" id="IPR011709">
    <property type="entry name" value="DEAD-box_helicase_OB_fold"/>
</dbReference>
<dbReference type="InterPro" id="IPR011545">
    <property type="entry name" value="DEAD/DEAH_box_helicase_dom"/>
</dbReference>
<dbReference type="InterPro" id="IPR002464">
    <property type="entry name" value="DNA/RNA_helicase_DEAH_CS"/>
</dbReference>
<dbReference type="InterPro" id="IPR048333">
    <property type="entry name" value="HA2_WH"/>
</dbReference>
<dbReference type="InterPro" id="IPR007502">
    <property type="entry name" value="Helicase-assoc_dom"/>
</dbReference>
<dbReference type="InterPro" id="IPR014001">
    <property type="entry name" value="Helicase_ATP-bd"/>
</dbReference>
<dbReference type="InterPro" id="IPR001650">
    <property type="entry name" value="Helicase_C-like"/>
</dbReference>
<dbReference type="InterPro" id="IPR027417">
    <property type="entry name" value="P-loop_NTPase"/>
</dbReference>
<dbReference type="PANTHER" id="PTHR18934">
    <property type="entry name" value="ATP-DEPENDENT RNA HELICASE"/>
    <property type="match status" value="1"/>
</dbReference>
<dbReference type="PANTHER" id="PTHR18934:SF91">
    <property type="entry name" value="PRE-MRNA-SPLICING FACTOR ATP-DEPENDENT RNA HELICASE PRP16"/>
    <property type="match status" value="1"/>
</dbReference>
<dbReference type="Pfam" id="PF00270">
    <property type="entry name" value="DEAD"/>
    <property type="match status" value="1"/>
</dbReference>
<dbReference type="Pfam" id="PF21010">
    <property type="entry name" value="HA2_C"/>
    <property type="match status" value="1"/>
</dbReference>
<dbReference type="Pfam" id="PF04408">
    <property type="entry name" value="HA2_N"/>
    <property type="match status" value="1"/>
</dbReference>
<dbReference type="Pfam" id="PF00271">
    <property type="entry name" value="Helicase_C"/>
    <property type="match status" value="1"/>
</dbReference>
<dbReference type="Pfam" id="PF07717">
    <property type="entry name" value="OB_NTP_bind"/>
    <property type="match status" value="1"/>
</dbReference>
<dbReference type="SMART" id="SM00487">
    <property type="entry name" value="DEXDc"/>
    <property type="match status" value="1"/>
</dbReference>
<dbReference type="SMART" id="SM00847">
    <property type="entry name" value="HA2"/>
    <property type="match status" value="1"/>
</dbReference>
<dbReference type="SMART" id="SM00490">
    <property type="entry name" value="HELICc"/>
    <property type="match status" value="1"/>
</dbReference>
<dbReference type="SUPFAM" id="SSF52540">
    <property type="entry name" value="P-loop containing nucleoside triphosphate hydrolases"/>
    <property type="match status" value="1"/>
</dbReference>
<dbReference type="PROSITE" id="PS00690">
    <property type="entry name" value="DEAH_ATP_HELICASE"/>
    <property type="match status" value="1"/>
</dbReference>
<dbReference type="PROSITE" id="PS51192">
    <property type="entry name" value="HELICASE_ATP_BIND_1"/>
    <property type="match status" value="1"/>
</dbReference>
<dbReference type="PROSITE" id="PS51194">
    <property type="entry name" value="HELICASE_CTER"/>
    <property type="match status" value="1"/>
</dbReference>
<keyword id="KW-0002">3D-structure</keyword>
<keyword id="KW-0007">Acetylation</keyword>
<keyword id="KW-0025">Alternative splicing</keyword>
<keyword id="KW-0067">ATP-binding</keyword>
<keyword id="KW-0903">Direct protein sequencing</keyword>
<keyword id="KW-0225">Disease variant</keyword>
<keyword id="KW-0347">Helicase</keyword>
<keyword id="KW-0378">Hydrolase</keyword>
<keyword id="KW-1017">Isopeptide bond</keyword>
<keyword id="KW-0507">mRNA processing</keyword>
<keyword id="KW-0508">mRNA splicing</keyword>
<keyword id="KW-0547">Nucleotide-binding</keyword>
<keyword id="KW-0539">Nucleus</keyword>
<keyword id="KW-0597">Phosphoprotein</keyword>
<keyword id="KW-1267">Proteomics identification</keyword>
<keyword id="KW-1185">Reference proteome</keyword>
<keyword id="KW-0682">Retinitis pigmentosa</keyword>
<keyword id="KW-0747">Spliceosome</keyword>
<keyword id="KW-0832">Ubl conjugation</keyword>
<accession>Q92620</accession>
<accession>B4DVG8</accession>
<accession>D3DWS7</accession>
<accession>O75212</accession>
<accession>Q96HN7</accession>